<proteinExistence type="evidence at protein level"/>
<dbReference type="EMBL" id="X77307">
    <property type="protein sequence ID" value="CAA54513.1"/>
    <property type="molecule type" value="mRNA"/>
</dbReference>
<dbReference type="EMBL" id="Z36748">
    <property type="protein sequence ID" value="CAA85319.1"/>
    <property type="molecule type" value="mRNA"/>
</dbReference>
<dbReference type="EMBL" id="AF156160">
    <property type="protein sequence ID" value="AAD39259.1"/>
    <property type="molecule type" value="Genomic_DNA"/>
</dbReference>
<dbReference type="EMBL" id="AF156158">
    <property type="protein sequence ID" value="AAD39259.1"/>
    <property type="status" value="JOINED"/>
    <property type="molecule type" value="Genomic_DNA"/>
</dbReference>
<dbReference type="EMBL" id="AF156159">
    <property type="protein sequence ID" value="AAD39259.1"/>
    <property type="status" value="JOINED"/>
    <property type="molecule type" value="Genomic_DNA"/>
</dbReference>
<dbReference type="EMBL" id="AY136751">
    <property type="protein sequence ID" value="AAN01277.1"/>
    <property type="molecule type" value="mRNA"/>
</dbReference>
<dbReference type="EMBL" id="AC009407">
    <property type="protein sequence ID" value="AAX93128.1"/>
    <property type="molecule type" value="Genomic_DNA"/>
</dbReference>
<dbReference type="EMBL" id="AK313741">
    <property type="protein sequence ID" value="BAG36482.1"/>
    <property type="molecule type" value="mRNA"/>
</dbReference>
<dbReference type="EMBL" id="CH471063">
    <property type="protein sequence ID" value="EAW70949.1"/>
    <property type="molecule type" value="Genomic_DNA"/>
</dbReference>
<dbReference type="EMBL" id="BC063123">
    <property type="protein sequence ID" value="AAH63123.1"/>
    <property type="molecule type" value="mRNA"/>
</dbReference>
<dbReference type="CCDS" id="CCDS2483.1"/>
<dbReference type="PIR" id="S43687">
    <property type="entry name" value="S43687"/>
</dbReference>
<dbReference type="PIR" id="S49442">
    <property type="entry name" value="S49442"/>
</dbReference>
<dbReference type="RefSeq" id="NP_000858.3">
    <property type="nucleotide sequence ID" value="NM_000867.4"/>
</dbReference>
<dbReference type="RefSeq" id="NP_001307687.1">
    <property type="nucleotide sequence ID" value="NM_001320758.1"/>
</dbReference>
<dbReference type="RefSeq" id="XP_047300070.1">
    <property type="nucleotide sequence ID" value="XM_047444114.1"/>
</dbReference>
<dbReference type="RefSeq" id="XP_054197669.1">
    <property type="nucleotide sequence ID" value="XM_054341694.1"/>
</dbReference>
<dbReference type="PDB" id="4IB4">
    <property type="method" value="X-ray"/>
    <property type="resolution" value="2.70 A"/>
    <property type="chains" value="A=36-248, A=314-405"/>
</dbReference>
<dbReference type="PDB" id="4NC3">
    <property type="method" value="X-ray"/>
    <property type="resolution" value="2.80 A"/>
    <property type="chains" value="A=36-248, A=314-405"/>
</dbReference>
<dbReference type="PDB" id="5TUD">
    <property type="method" value="X-ray"/>
    <property type="resolution" value="3.00 A"/>
    <property type="chains" value="A/D=36-248, A/D=314-405"/>
</dbReference>
<dbReference type="PDB" id="5TVN">
    <property type="method" value="X-ray"/>
    <property type="resolution" value="2.90 A"/>
    <property type="chains" value="A=41-248, A=313-400"/>
</dbReference>
<dbReference type="PDB" id="6DRX">
    <property type="method" value="X-ray"/>
    <property type="resolution" value="3.10 A"/>
    <property type="chains" value="A=36-248, A=314-404"/>
</dbReference>
<dbReference type="PDB" id="6DRY">
    <property type="method" value="X-ray"/>
    <property type="resolution" value="2.92 A"/>
    <property type="chains" value="A=36-248, A=313-404"/>
</dbReference>
<dbReference type="PDB" id="6DRZ">
    <property type="method" value="X-ray"/>
    <property type="resolution" value="3.10 A"/>
    <property type="chains" value="A=36-248, A=313-404"/>
</dbReference>
<dbReference type="PDB" id="6DS0">
    <property type="method" value="X-ray"/>
    <property type="resolution" value="3.19 A"/>
    <property type="chains" value="A=36-248, A=314-404"/>
</dbReference>
<dbReference type="PDB" id="7SRQ">
    <property type="method" value="EM"/>
    <property type="resolution" value="2.70 A"/>
    <property type="chains" value="R=36-405"/>
</dbReference>
<dbReference type="PDB" id="7SRR">
    <property type="method" value="EM"/>
    <property type="resolution" value="2.90 A"/>
    <property type="chains" value="R=36-405"/>
</dbReference>
<dbReference type="PDB" id="7SRS">
    <property type="method" value="EM"/>
    <property type="resolution" value="3.30 A"/>
    <property type="chains" value="R=36-464"/>
</dbReference>
<dbReference type="PDBsum" id="4IB4"/>
<dbReference type="PDBsum" id="4NC3"/>
<dbReference type="PDBsum" id="5TUD"/>
<dbReference type="PDBsum" id="5TVN"/>
<dbReference type="PDBsum" id="6DRX"/>
<dbReference type="PDBsum" id="6DRY"/>
<dbReference type="PDBsum" id="6DRZ"/>
<dbReference type="PDBsum" id="6DS0"/>
<dbReference type="PDBsum" id="7SRQ"/>
<dbReference type="PDBsum" id="7SRR"/>
<dbReference type="PDBsum" id="7SRS"/>
<dbReference type="EMDB" id="EMD-25401"/>
<dbReference type="EMDB" id="EMD-25402"/>
<dbReference type="EMDB" id="EMD-25403"/>
<dbReference type="SMR" id="P41595"/>
<dbReference type="BioGRID" id="109589">
    <property type="interactions" value="28"/>
</dbReference>
<dbReference type="CORUM" id="P41595"/>
<dbReference type="FunCoup" id="P41595">
    <property type="interactions" value="798"/>
</dbReference>
<dbReference type="IntAct" id="P41595">
    <property type="interactions" value="28"/>
</dbReference>
<dbReference type="MINT" id="P41595"/>
<dbReference type="STRING" id="9606.ENSP00000258400"/>
<dbReference type="BindingDB" id="P41595"/>
<dbReference type="ChEMBL" id="CHEMBL1833"/>
<dbReference type="DrugBank" id="DB14010">
    <property type="generic name" value="5-methoxy-N,N-dimethyltryptamine"/>
</dbReference>
<dbReference type="DrugBank" id="DB00543">
    <property type="generic name" value="Amoxapine"/>
</dbReference>
<dbReference type="DrugBank" id="DB00714">
    <property type="generic name" value="Apomorphine"/>
</dbReference>
<dbReference type="DrugBank" id="DB01238">
    <property type="generic name" value="Aripiprazole"/>
</dbReference>
<dbReference type="DrugBank" id="DB06216">
    <property type="generic name" value="Asenapine"/>
</dbReference>
<dbReference type="DrugBank" id="DB06029">
    <property type="generic name" value="BF-1"/>
</dbReference>
<dbReference type="DrugBank" id="DB09128">
    <property type="generic name" value="Brexpiprazole"/>
</dbReference>
<dbReference type="DrugBank" id="DB01200">
    <property type="generic name" value="Bromocriptine"/>
</dbReference>
<dbReference type="DrugBank" id="DB00248">
    <property type="generic name" value="Cabergoline"/>
</dbReference>
<dbReference type="DrugBank" id="DB06016">
    <property type="generic name" value="Cariprazine"/>
</dbReference>
<dbReference type="DrugBank" id="DB00477">
    <property type="generic name" value="Chlorpromazine"/>
</dbReference>
<dbReference type="DrugBank" id="DB01239">
    <property type="generic name" value="Chlorprothixene"/>
</dbReference>
<dbReference type="DrugBank" id="DB01242">
    <property type="generic name" value="Clomipramine"/>
</dbReference>
<dbReference type="DrugBank" id="DB00924">
    <property type="generic name" value="Cyclobenzaprine"/>
</dbReference>
<dbReference type="DrugBank" id="DB00434">
    <property type="generic name" value="Cyproheptadine"/>
</dbReference>
<dbReference type="DrugBank" id="DB11274">
    <property type="generic name" value="Dihydro-alpha-ergocryptine"/>
</dbReference>
<dbReference type="DrugBank" id="DB11273">
    <property type="generic name" value="Dihydroergocornine"/>
</dbReference>
<dbReference type="DrugBank" id="DB13345">
    <property type="generic name" value="Dihydroergocristine"/>
</dbReference>
<dbReference type="DrugBank" id="DB00320">
    <property type="generic name" value="Dihydroergotamine"/>
</dbReference>
<dbReference type="DrugBank" id="DB01142">
    <property type="generic name" value="Doxepin"/>
</dbReference>
<dbReference type="DrugBank" id="DB05492">
    <property type="generic name" value="Epicept NP-1"/>
</dbReference>
<dbReference type="DrugBank" id="DB01049">
    <property type="generic name" value="Ergoloid mesylate"/>
</dbReference>
<dbReference type="DrugBank" id="DB00696">
    <property type="generic name" value="Ergotamine"/>
</dbReference>
<dbReference type="DrugBank" id="DB06678">
    <property type="generic name" value="Esmirtazapine"/>
</dbReference>
<dbReference type="DrugBank" id="DB08980">
    <property type="generic name" value="Fendiline"/>
</dbReference>
<dbReference type="DrugBank" id="DB00574">
    <property type="generic name" value="Fenfluramine"/>
</dbReference>
<dbReference type="DrugBank" id="DB12141">
    <property type="generic name" value="Gilteritinib"/>
</dbReference>
<dbReference type="DrugBank" id="DB01221">
    <property type="generic name" value="Ketamine"/>
</dbReference>
<dbReference type="DrugBank" id="DB00589">
    <property type="generic name" value="Lisuride"/>
</dbReference>
<dbReference type="DrugBank" id="DB04829">
    <property type="generic name" value="Lysergic acid diethylamide"/>
</dbReference>
<dbReference type="DrugBank" id="DB12110">
    <property type="generic name" value="m-Chlorophenylpiperazine"/>
</dbReference>
<dbReference type="DrugBank" id="DB13520">
    <property type="generic name" value="Metergoline"/>
</dbReference>
<dbReference type="DrugBank" id="DB00353">
    <property type="generic name" value="Methylergometrine"/>
</dbReference>
<dbReference type="DrugBank" id="DB00247">
    <property type="generic name" value="Methysergide"/>
</dbReference>
<dbReference type="DrugBank" id="DB06148">
    <property type="generic name" value="Mianserin"/>
</dbReference>
<dbReference type="DrugBank" id="DB01454">
    <property type="generic name" value="Midomafetamine"/>
</dbReference>
<dbReference type="DrugBank" id="DB00805">
    <property type="generic name" value="Minaprine"/>
</dbReference>
<dbReference type="DrugBank" id="DB08804">
    <property type="generic name" value="Nandrolone decanoate"/>
</dbReference>
<dbReference type="DrugBank" id="DB06229">
    <property type="generic name" value="Ocaperidone"/>
</dbReference>
<dbReference type="DrugBank" id="DB05461">
    <property type="generic name" value="OPC-28326"/>
</dbReference>
<dbReference type="DrugBank" id="DB00715">
    <property type="generic name" value="Paroxetine"/>
</dbReference>
<dbReference type="DrugBank" id="DB01186">
    <property type="generic name" value="Pergolide"/>
</dbReference>
<dbReference type="DrugBank" id="DB09286">
    <property type="generic name" value="Pipamperone"/>
</dbReference>
<dbReference type="DrugBank" id="DB12478">
    <property type="generic name" value="Piribedil"/>
</dbReference>
<dbReference type="DrugBank" id="DB06153">
    <property type="generic name" value="Pizotifen"/>
</dbReference>
<dbReference type="DrugBank" id="DB05607">
    <property type="generic name" value="PRX-08066"/>
</dbReference>
<dbReference type="DrugBank" id="DB12693">
    <property type="generic name" value="Ritanserin"/>
</dbReference>
<dbReference type="DrugBank" id="DB08839">
    <property type="generic name" value="Serotonin"/>
</dbReference>
<dbReference type="DrugBank" id="DB09304">
    <property type="generic name" value="Setiptiline"/>
</dbReference>
<dbReference type="DrugBank" id="DB01079">
    <property type="generic name" value="Tegaserod"/>
</dbReference>
<dbReference type="DrugBank" id="DB13025">
    <property type="generic name" value="Tiapride"/>
</dbReference>
<dbReference type="DrugBank" id="DB00508">
    <property type="generic name" value="Triflupromazine"/>
</dbReference>
<dbReference type="DrugBank" id="DB12071">
    <property type="generic name" value="Vabicaserin"/>
</dbReference>
<dbReference type="DrugBank" id="DB09185">
    <property type="generic name" value="Viloxazine"/>
</dbReference>
<dbReference type="DrugBank" id="DB01392">
    <property type="generic name" value="Yohimbine"/>
</dbReference>
<dbReference type="DrugBank" id="DB00315">
    <property type="generic name" value="Zolmitriptan"/>
</dbReference>
<dbReference type="DrugCentral" id="P41595"/>
<dbReference type="GuidetoPHARMACOLOGY" id="7"/>
<dbReference type="TCDB" id="9.A.14.3.7">
    <property type="family name" value="the g-protein-coupled receptor (gpcr) family"/>
</dbReference>
<dbReference type="GlyCosmos" id="P41595">
    <property type="glycosylation" value="1 site, No reported glycans"/>
</dbReference>
<dbReference type="GlyGen" id="P41595">
    <property type="glycosylation" value="1 site"/>
</dbReference>
<dbReference type="iPTMnet" id="P41595"/>
<dbReference type="PhosphoSitePlus" id="P41595"/>
<dbReference type="BioMuta" id="HTR2B"/>
<dbReference type="DMDM" id="1168220"/>
<dbReference type="MassIVE" id="P41595"/>
<dbReference type="PaxDb" id="9606-ENSP00000258400"/>
<dbReference type="PeptideAtlas" id="P41595"/>
<dbReference type="ABCD" id="P41595">
    <property type="antibodies" value="1 sequenced antibody"/>
</dbReference>
<dbReference type="Antibodypedia" id="2921">
    <property type="antibodies" value="398 antibodies from 33 providers"/>
</dbReference>
<dbReference type="DNASU" id="3357"/>
<dbReference type="Ensembl" id="ENST00000258400.4">
    <property type="protein sequence ID" value="ENSP00000258400.3"/>
    <property type="gene ID" value="ENSG00000135914.6"/>
</dbReference>
<dbReference type="GeneID" id="3357"/>
<dbReference type="KEGG" id="hsa:3357"/>
<dbReference type="MANE-Select" id="ENST00000258400.4">
    <property type="protein sequence ID" value="ENSP00000258400.3"/>
    <property type="RefSeq nucleotide sequence ID" value="NM_000867.5"/>
    <property type="RefSeq protein sequence ID" value="NP_000858.3"/>
</dbReference>
<dbReference type="UCSC" id="uc002vro.4">
    <property type="organism name" value="human"/>
</dbReference>
<dbReference type="AGR" id="HGNC:5294"/>
<dbReference type="CTD" id="3357"/>
<dbReference type="DisGeNET" id="3357"/>
<dbReference type="GeneCards" id="HTR2B"/>
<dbReference type="HGNC" id="HGNC:5294">
    <property type="gene designation" value="HTR2B"/>
</dbReference>
<dbReference type="HPA" id="ENSG00000135914">
    <property type="expression patterns" value="Tissue enhanced (adrenal gland, cervix, endometrium, smooth muscle)"/>
</dbReference>
<dbReference type="MIM" id="601122">
    <property type="type" value="gene"/>
</dbReference>
<dbReference type="neXtProt" id="NX_P41595"/>
<dbReference type="OpenTargets" id="ENSG00000135914"/>
<dbReference type="PharmGKB" id="PA29554"/>
<dbReference type="VEuPathDB" id="HostDB:ENSG00000135914"/>
<dbReference type="eggNOG" id="KOG3656">
    <property type="taxonomic scope" value="Eukaryota"/>
</dbReference>
<dbReference type="GeneTree" id="ENSGT01050000244937"/>
<dbReference type="HOGENOM" id="CLU_009579_11_3_1"/>
<dbReference type="InParanoid" id="P41595"/>
<dbReference type="OMA" id="HLIFANW"/>
<dbReference type="OrthoDB" id="8710314at2759"/>
<dbReference type="PAN-GO" id="P41595">
    <property type="GO annotations" value="8 GO annotations based on evolutionary models"/>
</dbReference>
<dbReference type="PhylomeDB" id="P41595"/>
<dbReference type="TreeFam" id="TF316350"/>
<dbReference type="PathwayCommons" id="P41595"/>
<dbReference type="Reactome" id="R-HSA-390666">
    <property type="pathway name" value="Serotonin receptors"/>
</dbReference>
<dbReference type="Reactome" id="R-HSA-416476">
    <property type="pathway name" value="G alpha (q) signalling events"/>
</dbReference>
<dbReference type="SignaLink" id="P41595"/>
<dbReference type="SIGNOR" id="P41595"/>
<dbReference type="BioGRID-ORCS" id="3357">
    <property type="hits" value="16 hits in 1157 CRISPR screens"/>
</dbReference>
<dbReference type="EvolutionaryTrace" id="P41595"/>
<dbReference type="GeneWiki" id="5-HT2B_receptor"/>
<dbReference type="GenomeRNAi" id="3357"/>
<dbReference type="Pharos" id="P41595">
    <property type="development level" value="Tclin"/>
</dbReference>
<dbReference type="PRO" id="PR:P41595"/>
<dbReference type="Proteomes" id="UP000005640">
    <property type="component" value="Chromosome 2"/>
</dbReference>
<dbReference type="RNAct" id="P41595">
    <property type="molecule type" value="protein"/>
</dbReference>
<dbReference type="Bgee" id="ENSG00000135914">
    <property type="expression patterns" value="Expressed in decidua and 111 other cell types or tissues"/>
</dbReference>
<dbReference type="GO" id="GO:0005737">
    <property type="term" value="C:cytoplasm"/>
    <property type="evidence" value="ECO:0000314"/>
    <property type="project" value="UniProtKB"/>
</dbReference>
<dbReference type="GO" id="GO:0030425">
    <property type="term" value="C:dendrite"/>
    <property type="evidence" value="ECO:0000318"/>
    <property type="project" value="GO_Central"/>
</dbReference>
<dbReference type="GO" id="GO:0098666">
    <property type="term" value="C:G protein-coupled serotonin receptor complex"/>
    <property type="evidence" value="ECO:0000314"/>
    <property type="project" value="UniProtKB"/>
</dbReference>
<dbReference type="GO" id="GO:0005654">
    <property type="term" value="C:nucleoplasm"/>
    <property type="evidence" value="ECO:0000314"/>
    <property type="project" value="HPA"/>
</dbReference>
<dbReference type="GO" id="GO:0005886">
    <property type="term" value="C:plasma membrane"/>
    <property type="evidence" value="ECO:0000314"/>
    <property type="project" value="UniProtKB"/>
</dbReference>
<dbReference type="GO" id="GO:0045202">
    <property type="term" value="C:synapse"/>
    <property type="evidence" value="ECO:0007669"/>
    <property type="project" value="UniProtKB-SubCell"/>
</dbReference>
<dbReference type="GO" id="GO:0004993">
    <property type="term" value="F:G protein-coupled serotonin receptor activity"/>
    <property type="evidence" value="ECO:0000314"/>
    <property type="project" value="UniProtKB"/>
</dbReference>
<dbReference type="GO" id="GO:0001965">
    <property type="term" value="F:G-protein alpha-subunit binding"/>
    <property type="evidence" value="ECO:0000315"/>
    <property type="project" value="UniProtKB"/>
</dbReference>
<dbReference type="GO" id="GO:0001587">
    <property type="term" value="F:Gq/11-coupled serotonin receptor activity"/>
    <property type="evidence" value="ECO:0000314"/>
    <property type="project" value="UniProtKB"/>
</dbReference>
<dbReference type="GO" id="GO:0005096">
    <property type="term" value="F:GTPase activator activity"/>
    <property type="evidence" value="ECO:0000250"/>
    <property type="project" value="UniProtKB"/>
</dbReference>
<dbReference type="GO" id="GO:0030594">
    <property type="term" value="F:neurotransmitter receptor activity"/>
    <property type="evidence" value="ECO:0000318"/>
    <property type="project" value="GO_Central"/>
</dbReference>
<dbReference type="GO" id="GO:0051378">
    <property type="term" value="F:serotonin binding"/>
    <property type="evidence" value="ECO:0000314"/>
    <property type="project" value="UniProtKB"/>
</dbReference>
<dbReference type="GO" id="GO:0099589">
    <property type="term" value="F:serotonin receptor activity"/>
    <property type="evidence" value="ECO:0000314"/>
    <property type="project" value="UniProt"/>
</dbReference>
<dbReference type="GO" id="GO:0019722">
    <property type="term" value="P:calcium-mediated signaling"/>
    <property type="evidence" value="ECO:0000315"/>
    <property type="project" value="UniProtKB"/>
</dbReference>
<dbReference type="GO" id="GO:0003300">
    <property type="term" value="P:cardiac muscle hypertrophy"/>
    <property type="evidence" value="ECO:0000250"/>
    <property type="project" value="UniProtKB"/>
</dbReference>
<dbReference type="GO" id="GO:0019934">
    <property type="term" value="P:cGMP-mediated signaling"/>
    <property type="evidence" value="ECO:0000314"/>
    <property type="project" value="UniProtKB"/>
</dbReference>
<dbReference type="GO" id="GO:0007268">
    <property type="term" value="P:chemical synaptic transmission"/>
    <property type="evidence" value="ECO:0000318"/>
    <property type="project" value="GO_Central"/>
</dbReference>
<dbReference type="GO" id="GO:0048598">
    <property type="term" value="P:embryonic morphogenesis"/>
    <property type="evidence" value="ECO:0000250"/>
    <property type="project" value="UniProtKB"/>
</dbReference>
<dbReference type="GO" id="GO:0070371">
    <property type="term" value="P:ERK1 and ERK2 cascade"/>
    <property type="evidence" value="ECO:0000315"/>
    <property type="project" value="UniProtKB"/>
</dbReference>
<dbReference type="GO" id="GO:0007186">
    <property type="term" value="P:G protein-coupled receptor signaling pathway"/>
    <property type="evidence" value="ECO:0000315"/>
    <property type="project" value="UniProtKB"/>
</dbReference>
<dbReference type="GO" id="GO:0007187">
    <property type="term" value="P:G protein-coupled receptor signaling pathway, coupled to cyclic nucleotide second messenger"/>
    <property type="evidence" value="ECO:0000318"/>
    <property type="project" value="GO_Central"/>
</dbReference>
<dbReference type="GO" id="GO:0098664">
    <property type="term" value="P:G protein-coupled serotonin receptor signaling pathway"/>
    <property type="evidence" value="ECO:0000314"/>
    <property type="project" value="UniProtKB"/>
</dbReference>
<dbReference type="GO" id="GO:0003007">
    <property type="term" value="P:heart morphogenesis"/>
    <property type="evidence" value="ECO:0000250"/>
    <property type="project" value="UniProtKB"/>
</dbReference>
<dbReference type="GO" id="GO:0014827">
    <property type="term" value="P:intestine smooth muscle contraction"/>
    <property type="evidence" value="ECO:0000315"/>
    <property type="project" value="UniProtKB"/>
</dbReference>
<dbReference type="GO" id="GO:0006874">
    <property type="term" value="P:intracellular calcium ion homeostasis"/>
    <property type="evidence" value="ECO:0000314"/>
    <property type="project" value="UniProtKB"/>
</dbReference>
<dbReference type="GO" id="GO:0043066">
    <property type="term" value="P:negative regulation of apoptotic process"/>
    <property type="evidence" value="ECO:0000250"/>
    <property type="project" value="UniProtKB"/>
</dbReference>
<dbReference type="GO" id="GO:0014033">
    <property type="term" value="P:neural crest cell differentiation"/>
    <property type="evidence" value="ECO:0000250"/>
    <property type="project" value="UniProtKB"/>
</dbReference>
<dbReference type="GO" id="GO:0001755">
    <property type="term" value="P:neural crest cell migration"/>
    <property type="evidence" value="ECO:0000250"/>
    <property type="project" value="UniProtKB"/>
</dbReference>
<dbReference type="GO" id="GO:0007208">
    <property type="term" value="P:phospholipase C-activating serotonin receptor signaling pathway"/>
    <property type="evidence" value="ECO:0000314"/>
    <property type="project" value="UniProtKB"/>
</dbReference>
<dbReference type="GO" id="GO:0043123">
    <property type="term" value="P:positive regulation of canonical NF-kappaB signal transduction"/>
    <property type="evidence" value="ECO:0000270"/>
    <property type="project" value="UniProtKB"/>
</dbReference>
<dbReference type="GO" id="GO:0051781">
    <property type="term" value="P:positive regulation of cell division"/>
    <property type="evidence" value="ECO:0000250"/>
    <property type="project" value="UniProtKB"/>
</dbReference>
<dbReference type="GO" id="GO:0008284">
    <property type="term" value="P:positive regulation of cell population proliferation"/>
    <property type="evidence" value="ECO:0000314"/>
    <property type="project" value="UniProtKB"/>
</dbReference>
<dbReference type="GO" id="GO:0001819">
    <property type="term" value="P:positive regulation of cytokine production"/>
    <property type="evidence" value="ECO:0000314"/>
    <property type="project" value="UniProtKB"/>
</dbReference>
<dbReference type="GO" id="GO:0001938">
    <property type="term" value="P:positive regulation of endothelial cell proliferation"/>
    <property type="evidence" value="ECO:0000315"/>
    <property type="project" value="UniProtKB"/>
</dbReference>
<dbReference type="GO" id="GO:0070374">
    <property type="term" value="P:positive regulation of ERK1 and ERK2 cascade"/>
    <property type="evidence" value="ECO:0000314"/>
    <property type="project" value="UniProtKB"/>
</dbReference>
<dbReference type="GO" id="GO:0010513">
    <property type="term" value="P:positive regulation of phosphatidylinositol biosynthetic process"/>
    <property type="evidence" value="ECO:0000314"/>
    <property type="project" value="UniProtKB"/>
</dbReference>
<dbReference type="GO" id="GO:0050795">
    <property type="term" value="P:regulation of behavior"/>
    <property type="evidence" value="ECO:0000315"/>
    <property type="project" value="UniProtKB"/>
</dbReference>
<dbReference type="GO" id="GO:0051209">
    <property type="term" value="P:release of sequestered calcium ion into cytosol"/>
    <property type="evidence" value="ECO:0000314"/>
    <property type="project" value="UniProtKB"/>
</dbReference>
<dbReference type="GO" id="GO:0009410">
    <property type="term" value="P:response to xenobiotic stimulus"/>
    <property type="evidence" value="ECO:0000314"/>
    <property type="project" value="UniProtKB"/>
</dbReference>
<dbReference type="GO" id="GO:0007210">
    <property type="term" value="P:serotonin receptor signaling pathway"/>
    <property type="evidence" value="ECO:0000318"/>
    <property type="project" value="GO_Central"/>
</dbReference>
<dbReference type="GO" id="GO:0042310">
    <property type="term" value="P:vasoconstriction"/>
    <property type="evidence" value="ECO:0000315"/>
    <property type="project" value="UniProtKB"/>
</dbReference>
<dbReference type="CDD" id="cd15306">
    <property type="entry name" value="7tmA_5-HT2B"/>
    <property type="match status" value="1"/>
</dbReference>
<dbReference type="FunFam" id="1.20.1070.10:FF:000523">
    <property type="entry name" value="5-hydroxytryptamine receptor 2B"/>
    <property type="match status" value="2"/>
</dbReference>
<dbReference type="Gene3D" id="1.20.1070.10">
    <property type="entry name" value="Rhodopsin 7-helix transmembrane proteins"/>
    <property type="match status" value="1"/>
</dbReference>
<dbReference type="InterPro" id="IPR000482">
    <property type="entry name" value="5HT2B_rcpt"/>
</dbReference>
<dbReference type="InterPro" id="IPR002231">
    <property type="entry name" value="5HT_rcpt"/>
</dbReference>
<dbReference type="InterPro" id="IPR000276">
    <property type="entry name" value="GPCR_Rhodpsn"/>
</dbReference>
<dbReference type="InterPro" id="IPR017452">
    <property type="entry name" value="GPCR_Rhodpsn_7TM"/>
</dbReference>
<dbReference type="PANTHER" id="PTHR24247">
    <property type="entry name" value="5-HYDROXYTRYPTAMINE RECEPTOR"/>
    <property type="match status" value="1"/>
</dbReference>
<dbReference type="PANTHER" id="PTHR24247:SF31">
    <property type="entry name" value="5-HYDROXYTRYPTAMINE RECEPTOR 2B"/>
    <property type="match status" value="1"/>
</dbReference>
<dbReference type="Pfam" id="PF00001">
    <property type="entry name" value="7tm_1"/>
    <property type="match status" value="1"/>
</dbReference>
<dbReference type="PRINTS" id="PR00651">
    <property type="entry name" value="5HT2BRECEPTR"/>
</dbReference>
<dbReference type="PRINTS" id="PR01101">
    <property type="entry name" value="5HTRECEPTOR"/>
</dbReference>
<dbReference type="PRINTS" id="PR00237">
    <property type="entry name" value="GPCRRHODOPSN"/>
</dbReference>
<dbReference type="SMART" id="SM01381">
    <property type="entry name" value="7TM_GPCR_Srsx"/>
    <property type="match status" value="1"/>
</dbReference>
<dbReference type="SUPFAM" id="SSF81321">
    <property type="entry name" value="Family A G protein-coupled receptor-like"/>
    <property type="match status" value="1"/>
</dbReference>
<dbReference type="PROSITE" id="PS00237">
    <property type="entry name" value="G_PROTEIN_RECEP_F1_1"/>
    <property type="match status" value="1"/>
</dbReference>
<dbReference type="PROSITE" id="PS50262">
    <property type="entry name" value="G_PROTEIN_RECEP_F1_2"/>
    <property type="match status" value="1"/>
</dbReference>
<name>5HT2B_HUMAN</name>
<organism>
    <name type="scientific">Homo sapiens</name>
    <name type="common">Human</name>
    <dbReference type="NCBI Taxonomy" id="9606"/>
    <lineage>
        <taxon>Eukaryota</taxon>
        <taxon>Metazoa</taxon>
        <taxon>Chordata</taxon>
        <taxon>Craniata</taxon>
        <taxon>Vertebrata</taxon>
        <taxon>Euteleostomi</taxon>
        <taxon>Mammalia</taxon>
        <taxon>Eutheria</taxon>
        <taxon>Euarchontoglires</taxon>
        <taxon>Primates</taxon>
        <taxon>Haplorrhini</taxon>
        <taxon>Catarrhini</taxon>
        <taxon>Hominidae</taxon>
        <taxon>Homo</taxon>
    </lineage>
</organism>
<gene>
    <name evidence="22" type="primary">HTR2B</name>
</gene>
<reference key="1">
    <citation type="journal article" date="1994" name="FEBS Lett.">
        <title>Cloning and functional characterization of the human 5-HT2B serotonin receptor.</title>
        <authorList>
            <person name="Schmuck K."/>
            <person name="Ullmer C."/>
            <person name="Engels P."/>
            <person name="Luebbert H."/>
        </authorList>
    </citation>
    <scope>NUCLEOTIDE SEQUENCE [MRNA]</scope>
    <scope>FUNCTION</scope>
    <scope>SUBCELLULAR LOCATION</scope>
    <scope>TISSUE SPECIFICITY</scope>
</reference>
<reference key="2">
    <citation type="journal article" date="1994" name="FEBS Lett.">
        <title>The human serotonin 5-HT2B receptor: pharmacological link between 5-HT2 and 5-HT1D receptors.</title>
        <authorList>
            <person name="Choi D.S."/>
            <person name="Birraux G."/>
            <person name="Launay J.-M."/>
            <person name="Maroteaux L."/>
        </authorList>
    </citation>
    <scope>NUCLEOTIDE SEQUENCE [MRNA]</scope>
    <scope>FUNCTION</scope>
    <scope>SUBCELLULAR LOCATION</scope>
    <scope>TISSUE SPECIFICITY</scope>
    <source>
        <tissue>Brain</tissue>
    </source>
</reference>
<reference key="3">
    <citation type="journal article" date="1994" name="Mol. Pharmacol.">
        <title>Molecular cloning, functional expression, and mRNA tissue distribution of the human 5-hydroxytryptamine2B receptor.</title>
        <authorList>
            <person name="Kursar J.D."/>
            <person name="Nelson D.L."/>
            <person name="Wainscott D.B."/>
            <person name="Baez M."/>
        </authorList>
    </citation>
    <scope>NUCLEOTIDE SEQUENCE [MRNA]</scope>
    <scope>FUNCTION</scope>
    <scope>SUBCELLULAR LOCATION</scope>
    <scope>TISSUE SPECIFICITY</scope>
    <source>
        <tissue>Uterus</tissue>
    </source>
</reference>
<reference key="4">
    <citation type="journal article" date="2000" name="Mol. Cell. Probes">
        <title>Mutation screening of human 5-HT(2B) receptor gene in early-onset obsessive-compulsive disorder.</title>
        <authorList>
            <person name="Kim S.J."/>
            <person name="Veenstra-VanderWeele J."/>
            <person name="Hanna G.L."/>
            <person name="Gonen D."/>
            <person name="Leventhal B.L."/>
            <person name="Cook E.H. Jr."/>
        </authorList>
    </citation>
    <scope>NUCLEOTIDE SEQUENCE [GENOMIC DNA]</scope>
</reference>
<reference key="5">
    <citation type="submission" date="2002-07" db="EMBL/GenBank/DDBJ databases">
        <title>cDNA clones of human proteins involved in signal transduction sequenced by the Guthrie cDNA resource center (www.cdna.org).</title>
        <authorList>
            <person name="Puhl H.L. III"/>
            <person name="Ikeda S.R."/>
            <person name="Aronstam R.S."/>
        </authorList>
    </citation>
    <scope>NUCLEOTIDE SEQUENCE [LARGE SCALE MRNA]</scope>
    <source>
        <tissue>Colon</tissue>
    </source>
</reference>
<reference key="6">
    <citation type="journal article" date="2004" name="Nat. Genet.">
        <title>Complete sequencing and characterization of 21,243 full-length human cDNAs.</title>
        <authorList>
            <person name="Ota T."/>
            <person name="Suzuki Y."/>
            <person name="Nishikawa T."/>
            <person name="Otsuki T."/>
            <person name="Sugiyama T."/>
            <person name="Irie R."/>
            <person name="Wakamatsu A."/>
            <person name="Hayashi K."/>
            <person name="Sato H."/>
            <person name="Nagai K."/>
            <person name="Kimura K."/>
            <person name="Makita H."/>
            <person name="Sekine M."/>
            <person name="Obayashi M."/>
            <person name="Nishi T."/>
            <person name="Shibahara T."/>
            <person name="Tanaka T."/>
            <person name="Ishii S."/>
            <person name="Yamamoto J."/>
            <person name="Saito K."/>
            <person name="Kawai Y."/>
            <person name="Isono Y."/>
            <person name="Nakamura Y."/>
            <person name="Nagahari K."/>
            <person name="Murakami K."/>
            <person name="Yasuda T."/>
            <person name="Iwayanagi T."/>
            <person name="Wagatsuma M."/>
            <person name="Shiratori A."/>
            <person name="Sudo H."/>
            <person name="Hosoiri T."/>
            <person name="Kaku Y."/>
            <person name="Kodaira H."/>
            <person name="Kondo H."/>
            <person name="Sugawara M."/>
            <person name="Takahashi M."/>
            <person name="Kanda K."/>
            <person name="Yokoi T."/>
            <person name="Furuya T."/>
            <person name="Kikkawa E."/>
            <person name="Omura Y."/>
            <person name="Abe K."/>
            <person name="Kamihara K."/>
            <person name="Katsuta N."/>
            <person name="Sato K."/>
            <person name="Tanikawa M."/>
            <person name="Yamazaki M."/>
            <person name="Ninomiya K."/>
            <person name="Ishibashi T."/>
            <person name="Yamashita H."/>
            <person name="Murakawa K."/>
            <person name="Fujimori K."/>
            <person name="Tanai H."/>
            <person name="Kimata M."/>
            <person name="Watanabe M."/>
            <person name="Hiraoka S."/>
            <person name="Chiba Y."/>
            <person name="Ishida S."/>
            <person name="Ono Y."/>
            <person name="Takiguchi S."/>
            <person name="Watanabe S."/>
            <person name="Yosida M."/>
            <person name="Hotuta T."/>
            <person name="Kusano J."/>
            <person name="Kanehori K."/>
            <person name="Takahashi-Fujii A."/>
            <person name="Hara H."/>
            <person name="Tanase T.-O."/>
            <person name="Nomura Y."/>
            <person name="Togiya S."/>
            <person name="Komai F."/>
            <person name="Hara R."/>
            <person name="Takeuchi K."/>
            <person name="Arita M."/>
            <person name="Imose N."/>
            <person name="Musashino K."/>
            <person name="Yuuki H."/>
            <person name="Oshima A."/>
            <person name="Sasaki N."/>
            <person name="Aotsuka S."/>
            <person name="Yoshikawa Y."/>
            <person name="Matsunawa H."/>
            <person name="Ichihara T."/>
            <person name="Shiohata N."/>
            <person name="Sano S."/>
            <person name="Moriya S."/>
            <person name="Momiyama H."/>
            <person name="Satoh N."/>
            <person name="Takami S."/>
            <person name="Terashima Y."/>
            <person name="Suzuki O."/>
            <person name="Nakagawa S."/>
            <person name="Senoh A."/>
            <person name="Mizoguchi H."/>
            <person name="Goto Y."/>
            <person name="Shimizu F."/>
            <person name="Wakebe H."/>
            <person name="Hishigaki H."/>
            <person name="Watanabe T."/>
            <person name="Sugiyama A."/>
            <person name="Takemoto M."/>
            <person name="Kawakami B."/>
            <person name="Yamazaki M."/>
            <person name="Watanabe K."/>
            <person name="Kumagai A."/>
            <person name="Itakura S."/>
            <person name="Fukuzumi Y."/>
            <person name="Fujimori Y."/>
            <person name="Komiyama M."/>
            <person name="Tashiro H."/>
            <person name="Tanigami A."/>
            <person name="Fujiwara T."/>
            <person name="Ono T."/>
            <person name="Yamada K."/>
            <person name="Fujii Y."/>
            <person name="Ozaki K."/>
            <person name="Hirao M."/>
            <person name="Ohmori Y."/>
            <person name="Kawabata A."/>
            <person name="Hikiji T."/>
            <person name="Kobatake N."/>
            <person name="Inagaki H."/>
            <person name="Ikema Y."/>
            <person name="Okamoto S."/>
            <person name="Okitani R."/>
            <person name="Kawakami T."/>
            <person name="Noguchi S."/>
            <person name="Itoh T."/>
            <person name="Shigeta K."/>
            <person name="Senba T."/>
            <person name="Matsumura K."/>
            <person name="Nakajima Y."/>
            <person name="Mizuno T."/>
            <person name="Morinaga M."/>
            <person name="Sasaki M."/>
            <person name="Togashi T."/>
            <person name="Oyama M."/>
            <person name="Hata H."/>
            <person name="Watanabe M."/>
            <person name="Komatsu T."/>
            <person name="Mizushima-Sugano J."/>
            <person name="Satoh T."/>
            <person name="Shirai Y."/>
            <person name="Takahashi Y."/>
            <person name="Nakagawa K."/>
            <person name="Okumura K."/>
            <person name="Nagase T."/>
            <person name="Nomura N."/>
            <person name="Kikuchi H."/>
            <person name="Masuho Y."/>
            <person name="Yamashita R."/>
            <person name="Nakai K."/>
            <person name="Yada T."/>
            <person name="Nakamura Y."/>
            <person name="Ohara O."/>
            <person name="Isogai T."/>
            <person name="Sugano S."/>
        </authorList>
    </citation>
    <scope>NUCLEOTIDE SEQUENCE [LARGE SCALE MRNA]</scope>
</reference>
<reference key="7">
    <citation type="journal article" date="2005" name="Nature">
        <title>Generation and annotation of the DNA sequences of human chromosomes 2 and 4.</title>
        <authorList>
            <person name="Hillier L.W."/>
            <person name="Graves T.A."/>
            <person name="Fulton R.S."/>
            <person name="Fulton L.A."/>
            <person name="Pepin K.H."/>
            <person name="Minx P."/>
            <person name="Wagner-McPherson C."/>
            <person name="Layman D."/>
            <person name="Wylie K."/>
            <person name="Sekhon M."/>
            <person name="Becker M.C."/>
            <person name="Fewell G.A."/>
            <person name="Delehaunty K.D."/>
            <person name="Miner T.L."/>
            <person name="Nash W.E."/>
            <person name="Kremitzki C."/>
            <person name="Oddy L."/>
            <person name="Du H."/>
            <person name="Sun H."/>
            <person name="Bradshaw-Cordum H."/>
            <person name="Ali J."/>
            <person name="Carter J."/>
            <person name="Cordes M."/>
            <person name="Harris A."/>
            <person name="Isak A."/>
            <person name="van Brunt A."/>
            <person name="Nguyen C."/>
            <person name="Du F."/>
            <person name="Courtney L."/>
            <person name="Kalicki J."/>
            <person name="Ozersky P."/>
            <person name="Abbott S."/>
            <person name="Armstrong J."/>
            <person name="Belter E.A."/>
            <person name="Caruso L."/>
            <person name="Cedroni M."/>
            <person name="Cotton M."/>
            <person name="Davidson T."/>
            <person name="Desai A."/>
            <person name="Elliott G."/>
            <person name="Erb T."/>
            <person name="Fronick C."/>
            <person name="Gaige T."/>
            <person name="Haakenson W."/>
            <person name="Haglund K."/>
            <person name="Holmes A."/>
            <person name="Harkins R."/>
            <person name="Kim K."/>
            <person name="Kruchowski S.S."/>
            <person name="Strong C.M."/>
            <person name="Grewal N."/>
            <person name="Goyea E."/>
            <person name="Hou S."/>
            <person name="Levy A."/>
            <person name="Martinka S."/>
            <person name="Mead K."/>
            <person name="McLellan M.D."/>
            <person name="Meyer R."/>
            <person name="Randall-Maher J."/>
            <person name="Tomlinson C."/>
            <person name="Dauphin-Kohlberg S."/>
            <person name="Kozlowicz-Reilly A."/>
            <person name="Shah N."/>
            <person name="Swearengen-Shahid S."/>
            <person name="Snider J."/>
            <person name="Strong J.T."/>
            <person name="Thompson J."/>
            <person name="Yoakum M."/>
            <person name="Leonard S."/>
            <person name="Pearman C."/>
            <person name="Trani L."/>
            <person name="Radionenko M."/>
            <person name="Waligorski J.E."/>
            <person name="Wang C."/>
            <person name="Rock S.M."/>
            <person name="Tin-Wollam A.-M."/>
            <person name="Maupin R."/>
            <person name="Latreille P."/>
            <person name="Wendl M.C."/>
            <person name="Yang S.-P."/>
            <person name="Pohl C."/>
            <person name="Wallis J.W."/>
            <person name="Spieth J."/>
            <person name="Bieri T.A."/>
            <person name="Berkowicz N."/>
            <person name="Nelson J.O."/>
            <person name="Osborne J."/>
            <person name="Ding L."/>
            <person name="Meyer R."/>
            <person name="Sabo A."/>
            <person name="Shotland Y."/>
            <person name="Sinha P."/>
            <person name="Wohldmann P.E."/>
            <person name="Cook L.L."/>
            <person name="Hickenbotham M.T."/>
            <person name="Eldred J."/>
            <person name="Williams D."/>
            <person name="Jones T.A."/>
            <person name="She X."/>
            <person name="Ciccarelli F.D."/>
            <person name="Izaurralde E."/>
            <person name="Taylor J."/>
            <person name="Schmutz J."/>
            <person name="Myers R.M."/>
            <person name="Cox D.R."/>
            <person name="Huang X."/>
            <person name="McPherson J.D."/>
            <person name="Mardis E.R."/>
            <person name="Clifton S.W."/>
            <person name="Warren W.C."/>
            <person name="Chinwalla A.T."/>
            <person name="Eddy S.R."/>
            <person name="Marra M.A."/>
            <person name="Ovcharenko I."/>
            <person name="Furey T.S."/>
            <person name="Miller W."/>
            <person name="Eichler E.E."/>
            <person name="Bork P."/>
            <person name="Suyama M."/>
            <person name="Torrents D."/>
            <person name="Waterston R.H."/>
            <person name="Wilson R.K."/>
        </authorList>
    </citation>
    <scope>NUCLEOTIDE SEQUENCE [LARGE SCALE GENOMIC DNA]</scope>
</reference>
<reference key="8">
    <citation type="submission" date="2005-07" db="EMBL/GenBank/DDBJ databases">
        <authorList>
            <person name="Mural R.J."/>
            <person name="Istrail S."/>
            <person name="Sutton G.G."/>
            <person name="Florea L."/>
            <person name="Halpern A.L."/>
            <person name="Mobarry C.M."/>
            <person name="Lippert R."/>
            <person name="Walenz B."/>
            <person name="Shatkay H."/>
            <person name="Dew I."/>
            <person name="Miller J.R."/>
            <person name="Flanigan M.J."/>
            <person name="Edwards N.J."/>
            <person name="Bolanos R."/>
            <person name="Fasulo D."/>
            <person name="Halldorsson B.V."/>
            <person name="Hannenhalli S."/>
            <person name="Turner R."/>
            <person name="Yooseph S."/>
            <person name="Lu F."/>
            <person name="Nusskern D.R."/>
            <person name="Shue B.C."/>
            <person name="Zheng X.H."/>
            <person name="Zhong F."/>
            <person name="Delcher A.L."/>
            <person name="Huson D.H."/>
            <person name="Kravitz S.A."/>
            <person name="Mouchard L."/>
            <person name="Reinert K."/>
            <person name="Remington K.A."/>
            <person name="Clark A.G."/>
            <person name="Waterman M.S."/>
            <person name="Eichler E.E."/>
            <person name="Adams M.D."/>
            <person name="Hunkapiller M.W."/>
            <person name="Myers E.W."/>
            <person name="Venter J.C."/>
        </authorList>
    </citation>
    <scope>NUCLEOTIDE SEQUENCE [LARGE SCALE GENOMIC DNA]</scope>
</reference>
<reference key="9">
    <citation type="journal article" date="2004" name="Genome Res.">
        <title>The status, quality, and expansion of the NIH full-length cDNA project: the Mammalian Gene Collection (MGC).</title>
        <authorList>
            <consortium name="The MGC Project Team"/>
        </authorList>
    </citation>
    <scope>NUCLEOTIDE SEQUENCE [LARGE SCALE MRNA]</scope>
    <source>
        <tissue>Skin</tissue>
    </source>
</reference>
<reference key="10">
    <citation type="journal article" date="1996" name="Br. J. Pharmacol.">
        <title>5-HT2B receptor-mediated calcium release from ryanodine-sensitive intracellular stores in human pulmonary artery endothelial cells.</title>
        <authorList>
            <person name="Ullmer C."/>
            <person name="Boddeke H.G."/>
            <person name="Schmuck K."/>
            <person name="Lubbert H."/>
        </authorList>
    </citation>
    <scope>FUNCTION</scope>
    <scope>TISSUE SPECIFICITY</scope>
</reference>
<reference key="11">
    <citation type="journal article" date="2001" name="J. Biol. Chem.">
        <title>Interaction of serotonin 5-hydroxytryptamine type 2C receptors with PDZ10 of the multi-PDZ domain protein MUPP1.</title>
        <authorList>
            <person name="Becamel C."/>
            <person name="Figge A."/>
            <person name="Poliak S."/>
            <person name="Dumuis A."/>
            <person name="Peles E."/>
            <person name="Bockaert J."/>
            <person name="Luebbert H."/>
            <person name="Ullmer C."/>
        </authorList>
    </citation>
    <scope>INTERACTION WITH MPDZ</scope>
</reference>
<reference key="12">
    <citation type="journal article" date="2003" name="Br. J. Pharmacol.">
        <title>Agonist actions of dihydroergotamine at 5-HT2B and 5-HT2C receptors and their possible relevance to antimigraine efficacy.</title>
        <authorList>
            <person name="Schaerlinger B."/>
            <person name="Hickel P."/>
            <person name="Etienne N."/>
            <person name="Guesnier L."/>
            <person name="Maroteaux L."/>
        </authorList>
    </citation>
    <scope>FUNCTION</scope>
    <scope>SUBCELLULAR LOCATION</scope>
</reference>
<reference key="13">
    <citation type="journal article" date="2008" name="Chem. Rev.">
        <title>Serotonin receptors.</title>
        <authorList>
            <person name="Nichols D.E."/>
            <person name="Nichols C.D."/>
        </authorList>
    </citation>
    <scope>REVIEW</scope>
</reference>
<reference key="14">
    <citation type="journal article" date="2008" name="Eur. J. Pharmacol.">
        <title>Agonist-directed trafficking of signalling at serotonin 5-HT2A, 5-HT2B and 5-HT2C-VSV receptors mediated Gq/11 activation and calcium mobilisation in CHO cells.</title>
        <authorList>
            <person name="Cussac D."/>
            <person name="Boutet-Robinet E."/>
            <person name="Ailhaud M.C."/>
            <person name="Newman-Tancredi A."/>
            <person name="Martel J.C."/>
            <person name="Danty N."/>
            <person name="Rauly-Lestienne I."/>
        </authorList>
    </citation>
    <scope>FUNCTION</scope>
</reference>
<reference key="15">
    <citation type="journal article" date="2010" name="Nature">
        <title>A population-specific HTR2B stop codon predisposes to severe impulsivity.</title>
        <authorList>
            <person name="Bevilacqua L."/>
            <person name="Doly S."/>
            <person name="Kaprio J."/>
            <person name="Yuan Q."/>
            <person name="Tikkanen R."/>
            <person name="Paunio T."/>
            <person name="Zhou Z."/>
            <person name="Wedenoja J."/>
            <person name="Maroteaux L."/>
            <person name="Diaz S."/>
            <person name="Belmer A."/>
            <person name="Hodgkinson C.A."/>
            <person name="Dell'osso L."/>
            <person name="Suvisaari J."/>
            <person name="Coccaro E."/>
            <person name="Rose R.J."/>
            <person name="Peltonen L."/>
            <person name="Virkkunen M."/>
            <person name="Goldman D."/>
        </authorList>
    </citation>
    <scope>FUNCTION</scope>
    <scope>INVOLVEMENT IN IMPULSIVE BEHAVIOR</scope>
    <scope>TISSUE SPECIFICITY</scope>
    <scope>POLYMORPHISM</scope>
    <scope>VARIANTS GLU-45; LEU-173 AND TRP-388</scope>
</reference>
<reference key="16">
    <citation type="journal article" date="2011" name="Physiol. Res.">
        <title>Serotonin receptors - from molecular biology to clinical applications.</title>
        <authorList>
            <person name="Pytliak M."/>
            <person name="Vargova V."/>
            <person name="Mechirova V."/>
            <person name="Felsoci M."/>
        </authorList>
    </citation>
    <scope>REVIEW</scope>
</reference>
<reference key="17">
    <citation type="journal article" date="2013" name="Science">
        <title>Structural basis for molecular recognition at serotonin receptors.</title>
        <authorList>
            <person name="Wang C."/>
            <person name="Jiang Y."/>
            <person name="Ma J."/>
            <person name="Wu H."/>
            <person name="Wacker D."/>
            <person name="Katritch V."/>
            <person name="Han G.W."/>
            <person name="Liu W."/>
            <person name="Huang X.P."/>
            <person name="Vardy E."/>
            <person name="McCorvy J.D."/>
            <person name="Gao X."/>
            <person name="Zhou X.E."/>
            <person name="Melcher K."/>
            <person name="Zhang C."/>
            <person name="Bai F."/>
            <person name="Yang H."/>
            <person name="Yang L."/>
            <person name="Jiang H."/>
            <person name="Roth B.L."/>
            <person name="Cherezov V."/>
            <person name="Stevens R.C."/>
            <person name="Xu H.E."/>
        </authorList>
    </citation>
    <scope>FUNCTION</scope>
    <scope>SUBCELLULAR LOCATION</scope>
    <scope>MUTAGENESIS OF LEU-132; ASP-135; VAL-136; SER-139; THR-140; VAL-208; LEU-209; LYS-211; PHE-217; MET-218; ALA-225; TRP-337; PHE-340; ASN-344; LEU-347; VAL-348; LEU-362; GLU-363; VAL-366 AND TYR-370</scope>
</reference>
<reference evidence="23" key="18">
    <citation type="journal article" date="2013" name="Science">
        <title>Structural features for functional selectivity at serotonin receptors.</title>
        <authorList>
            <person name="Wacker D."/>
            <person name="Wang C."/>
            <person name="Katritch V."/>
            <person name="Han G.W."/>
            <person name="Huang X.P."/>
            <person name="Vardy E."/>
            <person name="McCorvy J.D."/>
            <person name="Jiang Y."/>
            <person name="Chu M."/>
            <person name="Siu F.Y."/>
            <person name="Liu W."/>
            <person name="Xu H.E."/>
            <person name="Cherezov V."/>
            <person name="Roth B.L."/>
            <person name="Stevens R.C."/>
        </authorList>
    </citation>
    <scope>X-RAY CRYSTALLOGRAPHY (2.7 ANGSTROMS) OF 36-248 AND 314-405 IN COMPLEX WITH THE AGONIST ERGOTAMINE</scope>
    <scope>FUNCTION</scope>
    <scope>ROLE IN ARRESTIN-MEDIATED SIGNALING AND CALCIUM RELEASE</scope>
    <scope>SUBCELLULAR LOCATION</scope>
    <scope>MEMBRANE TOPOLOGY</scope>
    <scope>DISULFIDE BONDS</scope>
</reference>
<reference evidence="24" key="19">
    <citation type="journal article" date="2013" name="Science">
        <title>Serial femtosecond crystallography of G protein-coupled receptors.</title>
        <authorList>
            <person name="Liu W."/>
            <person name="Wacker D."/>
            <person name="Gati C."/>
            <person name="Han G.W."/>
            <person name="James D."/>
            <person name="Wang D."/>
            <person name="Nelson G."/>
            <person name="Weierstall U."/>
            <person name="Katritch V."/>
            <person name="Barty A."/>
            <person name="Zatsepin N.A."/>
            <person name="Li D."/>
            <person name="Messerschmidt M."/>
            <person name="Boutet S."/>
            <person name="Williams G.J."/>
            <person name="Koglin J.E."/>
            <person name="Seibert M.M."/>
            <person name="Wang C."/>
            <person name="Shah S.T."/>
            <person name="Basu S."/>
            <person name="Fromme R."/>
            <person name="Kupitz C."/>
            <person name="Rendek K.N."/>
            <person name="Grotjohann I."/>
            <person name="Fromme P."/>
            <person name="Kirian R.A."/>
            <person name="Beyerlein K.R."/>
            <person name="White T.A."/>
            <person name="Chapman H.N."/>
            <person name="Caffrey M."/>
            <person name="Spence J.C."/>
            <person name="Stevens R.C."/>
            <person name="Cherezov V."/>
        </authorList>
    </citation>
    <scope>X-RAY CRYSTALLOGRAPHY (2.80 ANGSTROMS) OF 36-248 AND 314-405 IN COMPLEX WITH ERGOTAMINE</scope>
    <scope>FUNCTION</scope>
    <scope>DISULFIDE BONDS</scope>
    <scope>TOPOLOGY</scope>
</reference>
<reference key="20">
    <citation type="journal article" date="2017" name="Cell">
        <title>Crystal structure of an LSD-bound human serotonin receptor.</title>
        <authorList>
            <person name="Wacker D."/>
            <person name="Wang S."/>
            <person name="McCorvy J.D."/>
            <person name="Betz R.M."/>
            <person name="Venkatakrishnan A.J."/>
            <person name="Levit A."/>
            <person name="Lansu K."/>
            <person name="Schools Z.L."/>
            <person name="Che T."/>
            <person name="Nichols D.E."/>
            <person name="Shoichet B.K."/>
            <person name="Dror R.O."/>
            <person name="Roth B.L."/>
        </authorList>
    </citation>
    <scope>X-RAY CRYSTALLOGRAPHY (2.90 ANGSTROMS) OF 41-248 AND 314-400 IN COMPLEX WITH LYSERGIC ACID DIETHYLAMIDE</scope>
    <scope>FUNCTION</scope>
    <scope>DISULFIDE BONDS</scope>
    <scope>SUBCELLULAR LOCATION</scope>
    <scope>TOPOLOGY</scope>
    <scope>MUTAGENESIS OF LEU-209</scope>
</reference>
<reference evidence="26 27 28 29" key="21">
    <citation type="journal article" date="2018" name="Nat. Struct. Mol. Biol.">
        <title>Structural determinants of 5-HT2B receptor activation and biased agonism.</title>
        <authorList>
            <person name="McCorvy J.D."/>
            <person name="Wacker D."/>
            <person name="Wang S."/>
            <person name="Agegnehu B."/>
            <person name="Liu J."/>
            <person name="Lansu K."/>
            <person name="Tribo A.R."/>
            <person name="Olsen R.H.J."/>
            <person name="Che T."/>
            <person name="Jin J."/>
            <person name="Roth B.L."/>
        </authorList>
    </citation>
    <scope>X-RAY CRYSTALLOGRAPHY (2.92 ANGSTROMS) OF 36-248 AND 314-404 IN COMPLEX WITH METHYLERGONOVINE AGONIST</scope>
    <scope>FUNCTION</scope>
    <scope>DISULFIDE BONDS</scope>
    <scope>MUTAGENESIS OF THR-140 AND ALA-225</scope>
</reference>
<reference evidence="30 31 32" key="22">
    <citation type="journal article" date="2022" name="Neuron">
        <title>Signaling snapshots of a serotonin receptor activated by the prototypical psychedelic LSD.</title>
        <authorList>
            <person name="Cao C."/>
            <person name="Barros-Alvarez X."/>
            <person name="Zhang S."/>
            <person name="Kim K."/>
            <person name="Daemgen M.A."/>
            <person name="Panova O."/>
            <person name="Suomivuori C.M."/>
            <person name="Fay J.F."/>
            <person name="Zhong X."/>
            <person name="Krumm B.E."/>
            <person name="Gumpper R.H."/>
            <person name="Seven A.B."/>
            <person name="Robertson M.J."/>
            <person name="Krogan N.J."/>
            <person name="Huettenhain R."/>
            <person name="Nichols D.E."/>
            <person name="Dror R.O."/>
            <person name="Skiniotis G."/>
            <person name="Roth B.L."/>
        </authorList>
    </citation>
    <scope>STRUCTURE BY ELECTRON MICROSCOPY (2.7 ANGSTROMS) OF 36-405 IN COMPLEX WITH LYSERGIC ACID DIETHYLAMIDE; GNB1 AND GNCG2</scope>
    <scope>FUNCTION</scope>
    <scope>DISULFIDE BONDS</scope>
</reference>
<sequence length="481" mass="54298">MALSYRVSELQSTIPEHILQSTFVHVISSNWSGLQTESIPEEMKQIVEEQGNKLHWAALLILMVIIPTIGGNTLVILAVSLEKKLQYATNYFLMSLAVADLLVGLFVMPIALLTIMFEAMWPLPLVLCPAWLFLDVLFSTASIMHLCAISVDRYIAIKKPIQANQYNSRATAFIKITVVWLISIGIAIPVPIKGIETDVDNPNNITCVLTKERFGDFMLFGSLAAFFTPLAIMIVTYFLTIHALQKKAYLVKNKPPQRLTWLTVSTVFQRDETPCSSPEKVAMLDGSRKDKALPNSGDETLMRRTSTIGKKSVQTISNEQRASKVLGIVFFLFLLMWCPFFITNITLVLCDSCNQTTLQMLLEIFVWIGYVSSGVNPLVYTLFNKTFRDAFGRYITCNYRATKSVKTLRKRSSKIYFRNPMAENSKFFKKHGIRNGINPAMYQSPMRLRSSTIQSSSIILLDTLLLTENEGDKTEEQVSYV</sequence>
<feature type="chain" id="PRO_0000068953" description="5-hydroxytryptamine receptor 2B">
    <location>
        <begin position="1"/>
        <end position="481"/>
    </location>
</feature>
<feature type="topological domain" description="Extracellular" evidence="9 10 11 12 13">
    <location>
        <begin position="1"/>
        <end position="56"/>
    </location>
</feature>
<feature type="transmembrane region" description="Helical; Name=1" evidence="9 10 11 12 13">
    <location>
        <begin position="57"/>
        <end position="79"/>
    </location>
</feature>
<feature type="topological domain" description="Cytoplasmic" evidence="9 10 11 12 13">
    <location>
        <begin position="80"/>
        <end position="90"/>
    </location>
</feature>
<feature type="transmembrane region" description="Helical; Name=2" evidence="9 10 11 12 13">
    <location>
        <begin position="91"/>
        <end position="113"/>
    </location>
</feature>
<feature type="topological domain" description="Extracellular" evidence="9 10 11 12 13">
    <location>
        <begin position="114"/>
        <end position="129"/>
    </location>
</feature>
<feature type="transmembrane region" description="Helical; Name=3" evidence="9 10 11 12 13">
    <location>
        <begin position="130"/>
        <end position="151"/>
    </location>
</feature>
<feature type="topological domain" description="Cytoplasmic" evidence="9 10 11 12 13">
    <location>
        <begin position="152"/>
        <end position="171"/>
    </location>
</feature>
<feature type="transmembrane region" description="Helical; Name=4" evidence="9 10 11 12 13">
    <location>
        <begin position="172"/>
        <end position="192"/>
    </location>
</feature>
<feature type="topological domain" description="Extracellular" evidence="9 10 11 12 13">
    <location>
        <begin position="193"/>
        <end position="216"/>
    </location>
</feature>
<feature type="transmembrane region" description="Helical; Name=5" evidence="9 10 11 12 13">
    <location>
        <begin position="217"/>
        <end position="239"/>
    </location>
</feature>
<feature type="topological domain" description="Cytoplasmic" evidence="9 10 11 12 13">
    <location>
        <begin position="240"/>
        <end position="324"/>
    </location>
</feature>
<feature type="transmembrane region" description="Helical; Name=6" evidence="9 10 11 12 13">
    <location>
        <begin position="325"/>
        <end position="345"/>
    </location>
</feature>
<feature type="topological domain" description="Extracellular" evidence="9 10 11 12 13">
    <location>
        <begin position="346"/>
        <end position="360"/>
    </location>
</feature>
<feature type="transmembrane region" description="Helical; Name=7" evidence="9 10 11 12 13">
    <location>
        <begin position="361"/>
        <end position="382"/>
    </location>
</feature>
<feature type="topological domain" description="Cytoplasmic" evidence="9 10 11 12 13">
    <location>
        <begin position="383"/>
        <end position="481"/>
    </location>
</feature>
<feature type="short sequence motif" description="DRY motif; important for ligand-induced conformation changes" evidence="20 21">
    <location>
        <begin position="152"/>
        <end position="154"/>
    </location>
</feature>
<feature type="short sequence motif" description="[DE]RFG motif; may stabilize a conformation that preferentially activates signaling via beta-arrestin family members" evidence="20 21">
    <location>
        <begin position="212"/>
        <end position="215"/>
    </location>
</feature>
<feature type="short sequence motif" description="NPxxY motif; important for ligand-induced conformation changes and signaling" evidence="20 21">
    <location>
        <begin position="376"/>
        <end position="380"/>
    </location>
</feature>
<feature type="short sequence motif" description="PDZ-binding" evidence="4">
    <location>
        <begin position="479"/>
        <end position="481"/>
    </location>
</feature>
<feature type="binding site" evidence="9 23 24">
    <location>
        <position position="135"/>
    </location>
    <ligand>
        <name>ergotamine</name>
        <dbReference type="ChEBI" id="CHEBI:190463"/>
        <note>agonist</note>
    </ligand>
</feature>
<feature type="binding site" evidence="9 23 24">
    <location>
        <position position="140"/>
    </location>
    <ligand>
        <name>ergotamine</name>
        <dbReference type="ChEBI" id="CHEBI:190463"/>
        <note>agonist</note>
    </ligand>
</feature>
<feature type="binding site" evidence="9 23 24">
    <location>
        <position position="209"/>
    </location>
    <ligand>
        <name>ergotamine</name>
        <dbReference type="ChEBI" id="CHEBI:190463"/>
        <note>agonist</note>
    </ligand>
</feature>
<feature type="site" description="Hydrophobic barrier that decreases the speed of ligand binding and dissociation" evidence="11">
    <location>
        <position position="209"/>
    </location>
</feature>
<feature type="lipid moiety-binding region" description="S-palmitoyl cysteine" evidence="2">
    <location>
        <position position="397"/>
    </location>
</feature>
<feature type="glycosylation site" description="N-linked (GlcNAc...) asparagine" evidence="2">
    <location>
        <position position="30"/>
    </location>
</feature>
<feature type="disulfide bond" evidence="3 9 10 11 12 13 23 24 25 26 27 28 29 30 31 32">
    <location>
        <begin position="128"/>
        <end position="207"/>
    </location>
</feature>
<feature type="disulfide bond" evidence="3 9 10 11 12 13 23 24 25 26 27 28 29 30 31 32">
    <location>
        <begin position="350"/>
        <end position="353"/>
    </location>
</feature>
<feature type="sequence variant" id="VAR_064574" description="In dbSNP:rs78484969." evidence="7">
    <original>Q</original>
    <variation>E</variation>
    <location>
        <position position="45"/>
    </location>
</feature>
<feature type="sequence variant" id="VAR_064575" description="In dbSNP:rs77570025." evidence="7">
    <original>F</original>
    <variation>L</variation>
    <location>
        <position position="173"/>
    </location>
</feature>
<feature type="sequence variant" id="VAR_064576" description="In dbSNP:rs77982984." evidence="7">
    <original>R</original>
    <variation>W</variation>
    <location>
        <position position="388"/>
    </location>
</feature>
<feature type="sequence variant" id="VAR_055907" description="In dbSNP:rs6736017.">
    <original>M</original>
    <variation>V</variation>
    <location>
        <position position="421"/>
    </location>
</feature>
<feature type="mutagenesis site" description="No effect on agonist binding." evidence="8">
    <original>L</original>
    <variation>A</variation>
    <location>
        <position position="132"/>
    </location>
</feature>
<feature type="mutagenesis site" description="Abolishes agonist binding." evidence="8">
    <original>D</original>
    <variation>A</variation>
    <location>
        <position position="135"/>
    </location>
</feature>
<feature type="mutagenesis site" description="Slightly decreases agonist binding." evidence="8">
    <original>V</original>
    <variation>A</variation>
    <location>
        <position position="136"/>
    </location>
</feature>
<feature type="mutagenesis site" description="Slightly decreases agonist binding." evidence="8">
    <original>S</original>
    <variation>A</variation>
    <location>
        <position position="139"/>
    </location>
</feature>
<feature type="mutagenesis site" description="Decreased agonist binding." evidence="8 12">
    <original>T</original>
    <variation>V</variation>
    <variation>A</variation>
    <location>
        <position position="140"/>
    </location>
</feature>
<feature type="mutagenesis site" description="No effect on agonist binding." evidence="8">
    <original>V</original>
    <variation>A</variation>
    <location>
        <position position="208"/>
    </location>
</feature>
<feature type="mutagenesis site" description="No effect on agonist binding. Strongly increases dissociation of bound lysergic acid diethylamine, without affecting binding affinity. Reduces signaling via arrestins, but has no effect on signaling via the phosphatidylinositol-calcium second messenger system." evidence="8 11">
    <original>L</original>
    <variation>A</variation>
    <location>
        <position position="209"/>
    </location>
</feature>
<feature type="mutagenesis site" description="Impairs protein folding and stability. Strongly reduced cell surface expression." evidence="8">
    <original>K</original>
    <variation>A</variation>
    <location>
        <position position="211"/>
    </location>
</feature>
<feature type="mutagenesis site" description="Slightly decreases agonist binding." evidence="8">
    <original>F</original>
    <variation>A</variation>
    <location>
        <position position="217"/>
    </location>
</feature>
<feature type="mutagenesis site" description="No effect on agonist binding." evidence="8">
    <original>M</original>
    <variation>A</variation>
    <location>
        <position position="218"/>
    </location>
</feature>
<feature type="mutagenesis site" description="Does not affect agonist binding." evidence="8 12">
    <original>A</original>
    <variation>G</variation>
    <variation>S</variation>
    <location>
        <position position="225"/>
    </location>
</feature>
<feature type="mutagenesis site" description="Slightly decreases agonist binding." evidence="8">
    <original>W</original>
    <variation>A</variation>
    <location>
        <position position="337"/>
    </location>
</feature>
<feature type="mutagenesis site" description="Slightly decreases agonist binding." evidence="8">
    <original>F</original>
    <variation>A</variation>
    <location>
        <position position="340"/>
    </location>
</feature>
<feature type="mutagenesis site" description="Slightly decreases agonist binding." evidence="8">
    <original>N</original>
    <variation>A</variation>
    <location>
        <position position="344"/>
    </location>
</feature>
<feature type="mutagenesis site" description="No effect on agonist binding." evidence="8">
    <original>L</original>
    <variation>A</variation>
    <location>
        <position position="347"/>
    </location>
</feature>
<feature type="mutagenesis site" description="No effect on agonist binding." evidence="8">
    <original>V</original>
    <variation>A</variation>
    <location>
        <position position="348"/>
    </location>
</feature>
<feature type="mutagenesis site" description="No effect on agonist binding." evidence="8">
    <original>L</original>
    <variation>A</variation>
    <location>
        <position position="362"/>
    </location>
</feature>
<feature type="mutagenesis site" description="No effect on agonist binding." evidence="8">
    <original>E</original>
    <variation>A</variation>
    <location>
        <position position="363"/>
    </location>
</feature>
<feature type="mutagenesis site" description="No effect on agonist binding." evidence="8">
    <original>V</original>
    <variation>A</variation>
    <location>
        <position position="366"/>
    </location>
</feature>
<feature type="mutagenesis site" description="Slightly decreases agonist binding." evidence="8">
    <original>Y</original>
    <variation>A</variation>
    <location>
        <position position="370"/>
    </location>
</feature>
<feature type="sequence conflict" description="In Ref. 2; CAA85319." evidence="19" ref="2">
    <original>T</original>
    <variation>P</variation>
    <location>
        <position position="452"/>
    </location>
</feature>
<feature type="sequence conflict" description="In Ref. 9; AAH63123." evidence="19" ref="9">
    <original>Q</original>
    <variation>R</variation>
    <location>
        <position position="477"/>
    </location>
</feature>
<feature type="helix" evidence="34">
    <location>
        <begin position="40"/>
        <end position="49"/>
    </location>
</feature>
<feature type="helix" evidence="33">
    <location>
        <begin position="54"/>
        <end position="63"/>
    </location>
</feature>
<feature type="helix" evidence="33">
    <location>
        <begin position="65"/>
        <end position="81"/>
    </location>
</feature>
<feature type="helix" evidence="33">
    <location>
        <begin position="83"/>
        <end position="85"/>
    </location>
</feature>
<feature type="helix" evidence="33">
    <location>
        <begin position="88"/>
        <end position="106"/>
    </location>
</feature>
<feature type="helix" evidence="33">
    <location>
        <begin position="108"/>
        <end position="111"/>
    </location>
</feature>
<feature type="helix" evidence="33">
    <location>
        <begin position="113"/>
        <end position="116"/>
    </location>
</feature>
<feature type="turn" evidence="35">
    <location>
        <begin position="117"/>
        <end position="119"/>
    </location>
</feature>
<feature type="helix" evidence="33">
    <location>
        <begin position="127"/>
        <end position="158"/>
    </location>
</feature>
<feature type="helix" evidence="36">
    <location>
        <begin position="160"/>
        <end position="163"/>
    </location>
</feature>
<feature type="helix" evidence="33">
    <location>
        <begin position="165"/>
        <end position="187"/>
    </location>
</feature>
<feature type="helix" evidence="33">
    <location>
        <begin position="189"/>
        <end position="193"/>
    </location>
</feature>
<feature type="strand" evidence="36">
    <location>
        <begin position="198"/>
        <end position="201"/>
    </location>
</feature>
<feature type="helix" evidence="35">
    <location>
        <begin position="202"/>
        <end position="204"/>
    </location>
</feature>
<feature type="helix" evidence="33">
    <location>
        <begin position="211"/>
        <end position="225"/>
    </location>
</feature>
<feature type="helix" evidence="33">
    <location>
        <begin position="227"/>
        <end position="248"/>
    </location>
</feature>
<feature type="helix" evidence="37">
    <location>
        <begin position="281"/>
        <end position="284"/>
    </location>
</feature>
<feature type="helix" evidence="33">
    <location>
        <begin position="314"/>
        <end position="349"/>
    </location>
</feature>
<feature type="strand" evidence="33">
    <location>
        <begin position="351"/>
        <end position="353"/>
    </location>
</feature>
<feature type="helix" evidence="33">
    <location>
        <begin position="355"/>
        <end position="381"/>
    </location>
</feature>
<feature type="helix" evidence="33">
    <location>
        <begin position="385"/>
        <end position="394"/>
    </location>
</feature>
<feature type="turn" evidence="33">
    <location>
        <begin position="395"/>
        <end position="397"/>
    </location>
</feature>
<keyword id="KW-0002">3D-structure</keyword>
<keyword id="KW-0085">Behavior</keyword>
<keyword id="KW-1003">Cell membrane</keyword>
<keyword id="KW-1015">Disulfide bond</keyword>
<keyword id="KW-0297">G-protein coupled receptor</keyword>
<keyword id="KW-0325">Glycoprotein</keyword>
<keyword id="KW-0449">Lipoprotein</keyword>
<keyword id="KW-0472">Membrane</keyword>
<keyword id="KW-0564">Palmitate</keyword>
<keyword id="KW-0675">Receptor</keyword>
<keyword id="KW-1185">Reference proteome</keyword>
<keyword id="KW-0770">Synapse</keyword>
<keyword id="KW-0771">Synaptosome</keyword>
<keyword id="KW-0807">Transducer</keyword>
<keyword id="KW-0812">Transmembrane</keyword>
<keyword id="KW-1133">Transmembrane helix</keyword>
<protein>
    <recommendedName>
        <fullName evidence="18">5-hydroxytryptamine receptor 2B</fullName>
        <shortName evidence="18">5-HT-2B</shortName>
        <shortName evidence="18">5-HT2B</shortName>
    </recommendedName>
    <alternativeName>
        <fullName evidence="18">Serotonin receptor 2B</fullName>
    </alternativeName>
</protein>
<evidence type="ECO:0000250" key="1">
    <source>
        <dbReference type="UniProtKB" id="Q02152"/>
    </source>
</evidence>
<evidence type="ECO:0000255" key="2"/>
<evidence type="ECO:0000255" key="3">
    <source>
        <dbReference type="PROSITE-ProRule" id="PRU00521"/>
    </source>
</evidence>
<evidence type="ECO:0000269" key="4">
    <source>
    </source>
</evidence>
<evidence type="ECO:0000269" key="5">
    <source>
    </source>
</evidence>
<evidence type="ECO:0000269" key="6">
    <source>
    </source>
</evidence>
<evidence type="ECO:0000269" key="7">
    <source>
    </source>
</evidence>
<evidence type="ECO:0000269" key="8">
    <source>
    </source>
</evidence>
<evidence type="ECO:0000269" key="9">
    <source>
    </source>
</evidence>
<evidence type="ECO:0000269" key="10">
    <source>
    </source>
</evidence>
<evidence type="ECO:0000269" key="11">
    <source>
    </source>
</evidence>
<evidence type="ECO:0000269" key="12">
    <source>
    </source>
</evidence>
<evidence type="ECO:0000269" key="13">
    <source>
    </source>
</evidence>
<evidence type="ECO:0000269" key="14">
    <source>
    </source>
</evidence>
<evidence type="ECO:0000269" key="15">
    <source>
    </source>
</evidence>
<evidence type="ECO:0000269" key="16">
    <source>
    </source>
</evidence>
<evidence type="ECO:0000269" key="17">
    <source>
    </source>
</evidence>
<evidence type="ECO:0000303" key="18">
    <source>
    </source>
</evidence>
<evidence type="ECO:0000305" key="19"/>
<evidence type="ECO:0000305" key="20">
    <source>
    </source>
</evidence>
<evidence type="ECO:0000305" key="21">
    <source>
    </source>
</evidence>
<evidence type="ECO:0000312" key="22">
    <source>
        <dbReference type="HGNC" id="HGNC:5294"/>
    </source>
</evidence>
<evidence type="ECO:0007744" key="23">
    <source>
        <dbReference type="PDB" id="4IB4"/>
    </source>
</evidence>
<evidence type="ECO:0007744" key="24">
    <source>
        <dbReference type="PDB" id="4NC3"/>
    </source>
</evidence>
<evidence type="ECO:0007744" key="25">
    <source>
        <dbReference type="PDB" id="5TVN"/>
    </source>
</evidence>
<evidence type="ECO:0007744" key="26">
    <source>
        <dbReference type="PDB" id="6DRX"/>
    </source>
</evidence>
<evidence type="ECO:0007744" key="27">
    <source>
        <dbReference type="PDB" id="6DRY"/>
    </source>
</evidence>
<evidence type="ECO:0007744" key="28">
    <source>
        <dbReference type="PDB" id="6DRZ"/>
    </source>
</evidence>
<evidence type="ECO:0007744" key="29">
    <source>
        <dbReference type="PDB" id="6DS0"/>
    </source>
</evidence>
<evidence type="ECO:0007744" key="30">
    <source>
        <dbReference type="PDB" id="7SRQ"/>
    </source>
</evidence>
<evidence type="ECO:0007744" key="31">
    <source>
        <dbReference type="PDB" id="7SRR"/>
    </source>
</evidence>
<evidence type="ECO:0007744" key="32">
    <source>
        <dbReference type="PDB" id="7SRS"/>
    </source>
</evidence>
<evidence type="ECO:0007829" key="33">
    <source>
        <dbReference type="PDB" id="4IB4"/>
    </source>
</evidence>
<evidence type="ECO:0007829" key="34">
    <source>
        <dbReference type="PDB" id="6DRZ"/>
    </source>
</evidence>
<evidence type="ECO:0007829" key="35">
    <source>
        <dbReference type="PDB" id="7SRQ"/>
    </source>
</evidence>
<evidence type="ECO:0007829" key="36">
    <source>
        <dbReference type="PDB" id="7SRR"/>
    </source>
</evidence>
<evidence type="ECO:0007829" key="37">
    <source>
        <dbReference type="PDB" id="7SRS"/>
    </source>
</evidence>
<comment type="function">
    <text evidence="1 5 6 7 8 9 10 11 12 13 14 15 16 17">G-protein coupled receptor for 5-hydroxytryptamine (serotonin) (PubMed:18703043, PubMed:23519210, PubMed:7926008, PubMed:8078486, PubMed:8143856, PubMed:8882600). Also functions as a receptor for various ergot alkaloid derivatives and psychoactive substances (PubMed:12970106, PubMed:18703043, PubMed:23519210, PubMed:23519215, PubMed:24357322, PubMed:28129538, PubMed:30127358, PubMed:36087581, PubMed:7926008, PubMed:8078486, PubMed:8143856). Ligand binding causes a conformation change that triggers signaling via guanine nucleotide-binding proteins (G proteins) and modulates the activity of downstream effectors (PubMed:23519215, PubMed:28129538, PubMed:8078486, PubMed:8143856, PubMed:8882600). HTR2B is coupled to G(q)/G(11) G alpha proteins and activates phospholipase C-beta, releasing diacylglycerol (DAG) and inositol 1,4,5-trisphosphate (IP3) second messengers that modulate the activity of phosphatidylinositol 3-kinase and promote the release of Ca(2+) ions from intracellular stores, respectively (PubMed:18703043, PubMed:23519215, PubMed:28129538, PubMed:30127358, PubMed:36087581, PubMed:8078486, PubMed:8143856, PubMed:8882600). Beta-arrestin family members inhibit signaling via G proteins and mediate activation of alternative signaling pathways (PubMed:23519215, PubMed:28129538, PubMed:30127358, PubMed:36087581). Plays a role in the regulation of dopamine and 5-hydroxytryptamine release, 5-hydroxytryptamine uptake and in the regulation of extracellular dopamine and 5-hydroxytryptamine levels, and thereby affects neural activity. May play a role in the perception of pain (By similarity). Plays a role in the regulation of behavior, including impulsive behavior (PubMed:21179162). Required for normal proliferation of embryonic cardiac myocytes and normal heart development (By similarity). Protects cardiomyocytes against apoptosis (By similarity). Plays a role in the adaptation of pulmonary arteries to chronic hypoxia (By similarity). Plays a role in vasoconstriction (By similarity). Required for normal osteoblast function and proliferation, and for maintaining normal bone density (By similarity). Required for normal proliferation of the interstitial cells of Cajal in the intestine (By similarity).</text>
</comment>
<comment type="subunit">
    <text evidence="4">Interacts (via C-terminus) with MPDZ.</text>
</comment>
<comment type="interaction">
    <interactant intactId="EBI-7474947">
        <id>P41595</id>
    </interactant>
    <interactant intactId="EBI-6656333">
        <id>P28223</id>
        <label>HTR2A</label>
    </interactant>
    <organismsDiffer>false</organismsDiffer>
    <experiments>3</experiments>
</comment>
<comment type="interaction">
    <interactant intactId="EBI-7474947">
        <id>P41595</id>
    </interactant>
    <interactant intactId="EBI-994141">
        <id>P28335</id>
        <label>HTR2C</label>
    </interactant>
    <organismsDiffer>false</organismsDiffer>
    <experiments>4</experiments>
</comment>
<comment type="subcellular location">
    <subcellularLocation>
        <location evidence="5 8 9 11 14 15 16">Cell membrane</location>
        <topology evidence="9 10 11">Multi-pass membrane protein</topology>
    </subcellularLocation>
    <subcellularLocation>
        <location evidence="1">Synapse</location>
        <location evidence="1">Synaptosome</location>
    </subcellularLocation>
</comment>
<comment type="tissue specificity">
    <text evidence="7 14 15 16 17">Ubiquitous. Detected in liver, kidney, heart, pulmonary artery, and intestine. Detected at lower levels in blood, placenta and brain, especially in cerebellum, occipital cortex and frontal cortex.</text>
</comment>
<comment type="domain">
    <text evidence="9 10 11">Ligands are bound in a hydrophobic pocket formed by the transmembrane helices.</text>
</comment>
<comment type="polymorphism">
    <text evidence="7">A variation at a single nucleotide base, which results in an erroneous stop codon and affects Gln-20, triggers non-sense mediated RNA decay, such that no HTR2B-receptor protein is expressed. It is associated with impulsive behavior and co-segregates with disorders characterized by impulsivity. However, the presence of this variant is not in itself sufficient to cause impulsive behavior: male sex, testosterone level, alcohol and stress exposure are other factors playing important roles.</text>
</comment>
<comment type="miscellaneous">
    <text evidence="11">Binds lysergic acid diethylamine (LSD) in the orthosteric pocket, but is not the principal LSD receptor in the brain. Bound LSD dissociates extremely slowly, with a residence time of about 46 minutes at 37 degrees Celsius.</text>
</comment>
<comment type="similarity">
    <text evidence="3">Belongs to the G-protein coupled receptor 1 family.</text>
</comment>
<comment type="online information" name="Protein Spotlight">
    <link uri="https://www.proteinspotlight.org/back_issues/127"/>
    <text>On the spur of a whim - Issue 127 of March 2011</text>
</comment>
<accession>P41595</accession>
<accession>B2R9D5</accession>
<accession>Q53TI1</accession>
<accession>Q62221</accession>
<accession>Q6P523</accession>